<dbReference type="EC" id="7.-.-.-" evidence="1"/>
<dbReference type="EMBL" id="CP000056">
    <property type="protein sequence ID" value="AAX72987.1"/>
    <property type="molecule type" value="Genomic_DNA"/>
</dbReference>
<dbReference type="RefSeq" id="WP_011285331.1">
    <property type="nucleotide sequence ID" value="NC_007296.2"/>
</dbReference>
<dbReference type="SMR" id="Q48QM3"/>
<dbReference type="KEGG" id="spb:M28_Spy1877"/>
<dbReference type="HOGENOM" id="CLU_000604_1_22_9"/>
<dbReference type="GO" id="GO:0043190">
    <property type="term" value="C:ATP-binding cassette (ABC) transporter complex"/>
    <property type="evidence" value="ECO:0007669"/>
    <property type="project" value="TreeGrafter"/>
</dbReference>
<dbReference type="GO" id="GO:0005524">
    <property type="term" value="F:ATP binding"/>
    <property type="evidence" value="ECO:0007669"/>
    <property type="project" value="UniProtKB-KW"/>
</dbReference>
<dbReference type="GO" id="GO:0016887">
    <property type="term" value="F:ATP hydrolysis activity"/>
    <property type="evidence" value="ECO:0007669"/>
    <property type="project" value="InterPro"/>
</dbReference>
<dbReference type="GO" id="GO:0042626">
    <property type="term" value="F:ATPase-coupled transmembrane transporter activity"/>
    <property type="evidence" value="ECO:0007669"/>
    <property type="project" value="TreeGrafter"/>
</dbReference>
<dbReference type="CDD" id="cd03225">
    <property type="entry name" value="ABC_cobalt_CbiO_domain1"/>
    <property type="match status" value="1"/>
</dbReference>
<dbReference type="FunFam" id="3.40.50.300:FF:000224">
    <property type="entry name" value="Energy-coupling factor transporter ATP-binding protein EcfA"/>
    <property type="match status" value="1"/>
</dbReference>
<dbReference type="Gene3D" id="3.40.50.300">
    <property type="entry name" value="P-loop containing nucleotide triphosphate hydrolases"/>
    <property type="match status" value="1"/>
</dbReference>
<dbReference type="InterPro" id="IPR003593">
    <property type="entry name" value="AAA+_ATPase"/>
</dbReference>
<dbReference type="InterPro" id="IPR003439">
    <property type="entry name" value="ABC_transporter-like_ATP-bd"/>
</dbReference>
<dbReference type="InterPro" id="IPR017871">
    <property type="entry name" value="ABC_transporter-like_CS"/>
</dbReference>
<dbReference type="InterPro" id="IPR015856">
    <property type="entry name" value="ABC_transpr_CbiO/EcfA_su"/>
</dbReference>
<dbReference type="InterPro" id="IPR050095">
    <property type="entry name" value="ECF_ABC_transporter_ATP-bd"/>
</dbReference>
<dbReference type="InterPro" id="IPR030946">
    <property type="entry name" value="EcfA2"/>
</dbReference>
<dbReference type="InterPro" id="IPR027417">
    <property type="entry name" value="P-loop_NTPase"/>
</dbReference>
<dbReference type="NCBIfam" id="TIGR04521">
    <property type="entry name" value="ECF_ATPase_2"/>
    <property type="match status" value="1"/>
</dbReference>
<dbReference type="PANTHER" id="PTHR43553:SF27">
    <property type="entry name" value="ENERGY-COUPLING FACTOR TRANSPORTER ATP-BINDING PROTEIN ECFA2"/>
    <property type="match status" value="1"/>
</dbReference>
<dbReference type="PANTHER" id="PTHR43553">
    <property type="entry name" value="HEAVY METAL TRANSPORTER"/>
    <property type="match status" value="1"/>
</dbReference>
<dbReference type="Pfam" id="PF00005">
    <property type="entry name" value="ABC_tran"/>
    <property type="match status" value="1"/>
</dbReference>
<dbReference type="SMART" id="SM00382">
    <property type="entry name" value="AAA"/>
    <property type="match status" value="1"/>
</dbReference>
<dbReference type="SUPFAM" id="SSF52540">
    <property type="entry name" value="P-loop containing nucleoside triphosphate hydrolases"/>
    <property type="match status" value="1"/>
</dbReference>
<dbReference type="PROSITE" id="PS00211">
    <property type="entry name" value="ABC_TRANSPORTER_1"/>
    <property type="match status" value="1"/>
</dbReference>
<dbReference type="PROSITE" id="PS50893">
    <property type="entry name" value="ABC_TRANSPORTER_2"/>
    <property type="match status" value="1"/>
</dbReference>
<dbReference type="PROSITE" id="PS51246">
    <property type="entry name" value="CBIO"/>
    <property type="match status" value="1"/>
</dbReference>
<reference key="1">
    <citation type="journal article" date="2005" name="J. Infect. Dis.">
        <title>Genome sequence of a serotype M28 strain of group A Streptococcus: potential new insights into puerperal sepsis and bacterial disease specificity.</title>
        <authorList>
            <person name="Green N.M."/>
            <person name="Zhang S."/>
            <person name="Porcella S.F."/>
            <person name="Nagiec M.J."/>
            <person name="Barbian K.D."/>
            <person name="Beres S.B."/>
            <person name="Lefebvre R.B."/>
            <person name="Musser J.M."/>
        </authorList>
    </citation>
    <scope>NUCLEOTIDE SEQUENCE [LARGE SCALE GENOMIC DNA]</scope>
    <source>
        <strain>MGAS6180</strain>
    </source>
</reference>
<protein>
    <recommendedName>
        <fullName evidence="1">Energy-coupling factor transporter ATP-binding protein EcfA2</fullName>
        <shortName evidence="1">ECF transporter A component EcfA2</shortName>
        <ecNumber evidence="1">7.-.-.-</ecNumber>
    </recommendedName>
</protein>
<gene>
    <name evidence="1" type="primary">ecfA2</name>
    <name type="synonym">cbiO2</name>
    <name type="ordered locus">M28_Spy1877</name>
</gene>
<name>ECFA2_STRPM</name>
<comment type="function">
    <text evidence="1">ATP-binding (A) component of a common energy-coupling factor (ECF) ABC-transporter complex. Unlike classic ABC transporters this ECF transporter provides the energy necessary to transport a number of different substrates.</text>
</comment>
<comment type="subunit">
    <text evidence="1">Forms a stable energy-coupling factor (ECF) transporter complex composed of 2 membrane-embedded substrate-binding proteins (S component), 2 ATP-binding proteins (A component) and 2 transmembrane proteins (T component).</text>
</comment>
<comment type="subcellular location">
    <subcellularLocation>
        <location evidence="1">Cell membrane</location>
        <topology evidence="1">Peripheral membrane protein</topology>
    </subcellularLocation>
</comment>
<comment type="similarity">
    <text evidence="1">Belongs to the ABC transporter superfamily. Energy-coupling factor EcfA family.</text>
</comment>
<keyword id="KW-0067">ATP-binding</keyword>
<keyword id="KW-1003">Cell membrane</keyword>
<keyword id="KW-0472">Membrane</keyword>
<keyword id="KW-0547">Nucleotide-binding</keyword>
<keyword id="KW-1278">Translocase</keyword>
<keyword id="KW-0813">Transport</keyword>
<accession>Q48QM3</accession>
<sequence length="280" mass="30835">MSINLQNVSYTYQAGTPFEGRALFNINLDILDGSYTAFIGHTGSGKSTIMQLLNGLHVPTTGIVSVDKQDITNHSKNKEIKSIRKHVGLVFQFPESQLFEETVLKDVAFGPQNFGVSPEEAEALAREKLALVGISENLFEKNPFELSGGQMRRVAIAGILAMQPKVLVLDEPTAGLDPKGRKELMTIFKKLHQSGMTIVLVTHLMDDVANYADFVYVLDKGKIILSGKPKTIFQQVSLLEKKQLGVPKVTKLAQRLVDRGIPISSLPITLEELKEVLKHG</sequence>
<evidence type="ECO:0000255" key="1">
    <source>
        <dbReference type="HAMAP-Rule" id="MF_01710"/>
    </source>
</evidence>
<feature type="chain" id="PRO_0000288002" description="Energy-coupling factor transporter ATP-binding protein EcfA2">
    <location>
        <begin position="1"/>
        <end position="280"/>
    </location>
</feature>
<feature type="domain" description="ABC transporter" evidence="1">
    <location>
        <begin position="3"/>
        <end position="245"/>
    </location>
</feature>
<feature type="binding site" evidence="1">
    <location>
        <begin position="40"/>
        <end position="47"/>
    </location>
    <ligand>
        <name>ATP</name>
        <dbReference type="ChEBI" id="CHEBI:30616"/>
    </ligand>
</feature>
<organism>
    <name type="scientific">Streptococcus pyogenes serotype M28 (strain MGAS6180)</name>
    <dbReference type="NCBI Taxonomy" id="319701"/>
    <lineage>
        <taxon>Bacteria</taxon>
        <taxon>Bacillati</taxon>
        <taxon>Bacillota</taxon>
        <taxon>Bacilli</taxon>
        <taxon>Lactobacillales</taxon>
        <taxon>Streptococcaceae</taxon>
        <taxon>Streptococcus</taxon>
    </lineage>
</organism>
<proteinExistence type="inferred from homology"/>